<feature type="signal peptide" evidence="2">
    <location>
        <begin position="1"/>
        <end position="20"/>
    </location>
</feature>
<feature type="chain" id="PRO_0000017327" description="Low-density lipoprotein receptor-related protein 4">
    <location>
        <begin position="21"/>
        <end position="1905"/>
    </location>
</feature>
<feature type="topological domain" description="Extracellular" evidence="2">
    <location>
        <begin position="21"/>
        <end position="1723"/>
    </location>
</feature>
<feature type="transmembrane region" description="Helical" evidence="2">
    <location>
        <begin position="1724"/>
        <end position="1746"/>
    </location>
</feature>
<feature type="topological domain" description="Cytoplasmic" evidence="2">
    <location>
        <begin position="1747"/>
        <end position="1905"/>
    </location>
</feature>
<feature type="domain" description="LDL-receptor class A 1" evidence="3">
    <location>
        <begin position="26"/>
        <end position="67"/>
    </location>
</feature>
<feature type="domain" description="LDL-receptor class A 2" evidence="3">
    <location>
        <begin position="70"/>
        <end position="106"/>
    </location>
</feature>
<feature type="domain" description="LDL-receptor class A 3" evidence="3">
    <location>
        <begin position="109"/>
        <end position="144"/>
    </location>
</feature>
<feature type="domain" description="LDL-receptor class A 4" evidence="3">
    <location>
        <begin position="147"/>
        <end position="183"/>
    </location>
</feature>
<feature type="domain" description="LDL-receptor class A 5" evidence="3">
    <location>
        <begin position="190"/>
        <end position="226"/>
    </location>
</feature>
<feature type="domain" description="LDL-receptor class A 6" evidence="3">
    <location>
        <begin position="230"/>
        <end position="266"/>
    </location>
</feature>
<feature type="domain" description="LDL-receptor class A 7" evidence="3">
    <location>
        <begin position="269"/>
        <end position="305"/>
    </location>
</feature>
<feature type="domain" description="LDL-receptor class A 8" evidence="3">
    <location>
        <begin position="311"/>
        <end position="350"/>
    </location>
</feature>
<feature type="domain" description="EGF-like 1; atypical">
    <location>
        <begin position="354"/>
        <end position="394"/>
    </location>
</feature>
<feature type="domain" description="EGF-like 2; calcium-binding">
    <location>
        <begin position="395"/>
        <end position="434"/>
    </location>
</feature>
<feature type="repeat" description="LDL-receptor class B 1">
    <location>
        <begin position="480"/>
        <end position="522"/>
    </location>
</feature>
<feature type="repeat" description="LDL-receptor class B 2">
    <location>
        <begin position="523"/>
        <end position="565"/>
    </location>
</feature>
<feature type="repeat" description="LDL-receptor class B 3">
    <location>
        <begin position="566"/>
        <end position="609"/>
    </location>
</feature>
<feature type="repeat" description="LDL-receptor class B 4">
    <location>
        <begin position="610"/>
        <end position="652"/>
    </location>
</feature>
<feature type="repeat" description="LDL-receptor class B 5">
    <location>
        <begin position="653"/>
        <end position="693"/>
    </location>
</feature>
<feature type="domain" description="EGF-like 3">
    <location>
        <begin position="698"/>
        <end position="737"/>
    </location>
</feature>
<feature type="repeat" description="LDL-receptor class B 6">
    <location>
        <begin position="785"/>
        <end position="827"/>
    </location>
</feature>
<feature type="repeat" description="LDL-receptor class B 7">
    <location>
        <begin position="828"/>
        <end position="870"/>
    </location>
</feature>
<feature type="repeat" description="LDL-receptor class B 8">
    <location>
        <begin position="871"/>
        <end position="914"/>
    </location>
</feature>
<feature type="repeat" description="LDL-receptor class B 9">
    <location>
        <begin position="915"/>
        <end position="956"/>
    </location>
</feature>
<feature type="repeat" description="LDL-receptor class B 10">
    <location>
        <begin position="957"/>
        <end position="998"/>
    </location>
</feature>
<feature type="repeat" description="LDL-receptor class B 11">
    <location>
        <begin position="1093"/>
        <end position="1135"/>
    </location>
</feature>
<feature type="repeat" description="LDL-receptor class B 12">
    <location>
        <begin position="1136"/>
        <end position="1178"/>
    </location>
</feature>
<feature type="repeat" description="LDL-receptor class B 13">
    <location>
        <begin position="1179"/>
        <end position="1222"/>
    </location>
</feature>
<feature type="repeat" description="LDL-receptor class B 14">
    <location>
        <begin position="1223"/>
        <end position="1263"/>
    </location>
</feature>
<feature type="repeat" description="LDL-receptor class B 15">
    <location>
        <begin position="1264"/>
        <end position="1306"/>
    </location>
</feature>
<feature type="repeat" description="LDL-receptor class B 16">
    <location>
        <begin position="1397"/>
        <end position="1439"/>
    </location>
</feature>
<feature type="repeat" description="LDL-receptor class B 17">
    <location>
        <begin position="1440"/>
        <end position="1482"/>
    </location>
</feature>
<feature type="repeat" description="LDL-receptor class B 18">
    <location>
        <begin position="1483"/>
        <end position="1526"/>
    </location>
</feature>
<feature type="repeat" description="LDL-receptor class B 19">
    <location>
        <begin position="1527"/>
        <end position="1568"/>
    </location>
</feature>
<feature type="repeat" description="LDL-receptor class B 20">
    <location>
        <begin position="1569"/>
        <end position="1610"/>
    </location>
</feature>
<feature type="region of interest" description="Disordered" evidence="4">
    <location>
        <begin position="1659"/>
        <end position="1696"/>
    </location>
</feature>
<feature type="region of interest" description="Disordered" evidence="4">
    <location>
        <begin position="1853"/>
        <end position="1905"/>
    </location>
</feature>
<feature type="compositionally biased region" description="Low complexity" evidence="4">
    <location>
        <begin position="1671"/>
        <end position="1690"/>
    </location>
</feature>
<feature type="compositionally biased region" description="Polar residues" evidence="4">
    <location>
        <begin position="1872"/>
        <end position="1881"/>
    </location>
</feature>
<feature type="compositionally biased region" description="Basic and acidic residues" evidence="4">
    <location>
        <begin position="1882"/>
        <end position="1905"/>
    </location>
</feature>
<feature type="glycosylation site" description="N-linked (GlcNAc...) asparagine" evidence="2">
    <location>
        <position position="264"/>
    </location>
</feature>
<feature type="glycosylation site" description="N-linked (GlcNAc...) asparagine" evidence="2">
    <location>
        <position position="498"/>
    </location>
</feature>
<feature type="glycosylation site" description="N-linked (GlcNAc...) asparagine" evidence="2">
    <location>
        <position position="719"/>
    </location>
</feature>
<feature type="glycosylation site" description="N-linked (GlcNAc...) asparagine" evidence="2">
    <location>
        <position position="901"/>
    </location>
</feature>
<feature type="glycosylation site" description="N-linked (GlcNAc...) asparagine" evidence="2">
    <location>
        <position position="1077"/>
    </location>
</feature>
<feature type="glycosylation site" description="N-linked (GlcNAc...) asparagine" evidence="2">
    <location>
        <position position="1415"/>
    </location>
</feature>
<feature type="glycosylation site" description="N-linked (GlcNAc...) asparagine" evidence="2">
    <location>
        <position position="1467"/>
    </location>
</feature>
<feature type="disulfide bond" evidence="3">
    <location>
        <begin position="27"/>
        <end position="44"/>
    </location>
</feature>
<feature type="disulfide bond" evidence="3">
    <location>
        <begin position="34"/>
        <end position="57"/>
    </location>
</feature>
<feature type="disulfide bond" evidence="3">
    <location>
        <begin position="51"/>
        <end position="66"/>
    </location>
</feature>
<feature type="disulfide bond" evidence="3">
    <location>
        <begin position="71"/>
        <end position="83"/>
    </location>
</feature>
<feature type="disulfide bond" evidence="3">
    <location>
        <begin position="78"/>
        <end position="96"/>
    </location>
</feature>
<feature type="disulfide bond" evidence="3">
    <location>
        <begin position="90"/>
        <end position="105"/>
    </location>
</feature>
<feature type="disulfide bond" evidence="3">
    <location>
        <begin position="110"/>
        <end position="122"/>
    </location>
</feature>
<feature type="disulfide bond" evidence="3">
    <location>
        <begin position="117"/>
        <end position="135"/>
    </location>
</feature>
<feature type="disulfide bond" evidence="3">
    <location>
        <begin position="129"/>
        <end position="143"/>
    </location>
</feature>
<feature type="disulfide bond" evidence="3">
    <location>
        <begin position="148"/>
        <end position="160"/>
    </location>
</feature>
<feature type="disulfide bond" evidence="3">
    <location>
        <begin position="155"/>
        <end position="173"/>
    </location>
</feature>
<feature type="disulfide bond" evidence="3">
    <location>
        <begin position="167"/>
        <end position="182"/>
    </location>
</feature>
<feature type="disulfide bond" evidence="3">
    <location>
        <begin position="191"/>
        <end position="203"/>
    </location>
</feature>
<feature type="disulfide bond" evidence="3">
    <location>
        <begin position="198"/>
        <end position="216"/>
    </location>
</feature>
<feature type="disulfide bond" evidence="3">
    <location>
        <begin position="210"/>
        <end position="225"/>
    </location>
</feature>
<feature type="disulfide bond" evidence="3">
    <location>
        <begin position="231"/>
        <end position="243"/>
    </location>
</feature>
<feature type="disulfide bond" evidence="3">
    <location>
        <begin position="238"/>
        <end position="256"/>
    </location>
</feature>
<feature type="disulfide bond" evidence="3">
    <location>
        <begin position="250"/>
        <end position="265"/>
    </location>
</feature>
<feature type="disulfide bond" evidence="3">
    <location>
        <begin position="270"/>
        <end position="282"/>
    </location>
</feature>
<feature type="disulfide bond" evidence="3">
    <location>
        <begin position="277"/>
        <end position="295"/>
    </location>
</feature>
<feature type="disulfide bond" evidence="3">
    <location>
        <begin position="289"/>
        <end position="304"/>
    </location>
</feature>
<feature type="disulfide bond" evidence="3">
    <location>
        <begin position="312"/>
        <end position="324"/>
    </location>
</feature>
<feature type="disulfide bond" evidence="3">
    <location>
        <begin position="319"/>
        <end position="337"/>
    </location>
</feature>
<feature type="disulfide bond" evidence="3">
    <location>
        <begin position="331"/>
        <end position="349"/>
    </location>
</feature>
<feature type="disulfide bond" evidence="3">
    <location>
        <begin position="358"/>
        <end position="369"/>
    </location>
</feature>
<feature type="disulfide bond" evidence="3">
    <location>
        <begin position="365"/>
        <end position="378"/>
    </location>
</feature>
<feature type="disulfide bond" evidence="3">
    <location>
        <begin position="380"/>
        <end position="393"/>
    </location>
</feature>
<feature type="disulfide bond" evidence="3">
    <location>
        <begin position="399"/>
        <end position="409"/>
    </location>
</feature>
<feature type="disulfide bond" evidence="3">
    <location>
        <begin position="405"/>
        <end position="418"/>
    </location>
</feature>
<feature type="disulfide bond" evidence="3">
    <location>
        <begin position="420"/>
        <end position="433"/>
    </location>
</feature>
<feature type="disulfide bond" evidence="3">
    <location>
        <begin position="702"/>
        <end position="713"/>
    </location>
</feature>
<feature type="disulfide bond" evidence="3">
    <location>
        <begin position="709"/>
        <end position="722"/>
    </location>
</feature>
<feature type="disulfide bond" evidence="3">
    <location>
        <begin position="724"/>
        <end position="736"/>
    </location>
</feature>
<feature type="strand" evidence="9">
    <location>
        <begin position="364"/>
        <end position="369"/>
    </location>
</feature>
<feature type="strand" evidence="9">
    <location>
        <begin position="399"/>
        <end position="402"/>
    </location>
</feature>
<feature type="strand" evidence="8">
    <location>
        <begin position="406"/>
        <end position="409"/>
    </location>
</feature>
<feature type="strand" evidence="8">
    <location>
        <begin position="424"/>
        <end position="426"/>
    </location>
</feature>
<feature type="strand" evidence="8">
    <location>
        <begin position="433"/>
        <end position="438"/>
    </location>
</feature>
<feature type="strand" evidence="8">
    <location>
        <begin position="441"/>
        <end position="445"/>
    </location>
</feature>
<feature type="strand" evidence="8">
    <location>
        <begin position="450"/>
        <end position="453"/>
    </location>
</feature>
<feature type="strand" evidence="8">
    <location>
        <begin position="460"/>
        <end position="464"/>
    </location>
</feature>
<feature type="strand" evidence="8">
    <location>
        <begin position="470"/>
        <end position="476"/>
    </location>
</feature>
<feature type="turn" evidence="8">
    <location>
        <begin position="477"/>
        <end position="480"/>
    </location>
</feature>
<feature type="strand" evidence="8">
    <location>
        <begin position="481"/>
        <end position="486"/>
    </location>
</feature>
<feature type="turn" evidence="8">
    <location>
        <begin position="487"/>
        <end position="490"/>
    </location>
</feature>
<feature type="strand" evidence="8">
    <location>
        <begin position="491"/>
        <end position="496"/>
    </location>
</feature>
<feature type="strand" evidence="8">
    <location>
        <begin position="503"/>
        <end position="506"/>
    </location>
</feature>
<feature type="strand" evidence="8">
    <location>
        <begin position="515"/>
        <end position="519"/>
    </location>
</feature>
<feature type="turn" evidence="8">
    <location>
        <begin position="520"/>
        <end position="523"/>
    </location>
</feature>
<feature type="strand" evidence="8">
    <location>
        <begin position="524"/>
        <end position="529"/>
    </location>
</feature>
<feature type="turn" evidence="8">
    <location>
        <begin position="530"/>
        <end position="533"/>
    </location>
</feature>
<feature type="strand" evidence="8">
    <location>
        <begin position="534"/>
        <end position="539"/>
    </location>
</feature>
<feature type="strand" evidence="8">
    <location>
        <begin position="546"/>
        <end position="549"/>
    </location>
</feature>
<feature type="strand" evidence="8">
    <location>
        <begin position="556"/>
        <end position="562"/>
    </location>
</feature>
<feature type="turn" evidence="8">
    <location>
        <begin position="563"/>
        <end position="566"/>
    </location>
</feature>
<feature type="strand" evidence="8">
    <location>
        <begin position="567"/>
        <end position="572"/>
    </location>
</feature>
<feature type="strand" evidence="8">
    <location>
        <begin position="574"/>
        <end position="576"/>
    </location>
</feature>
<feature type="strand" evidence="8">
    <location>
        <begin position="578"/>
        <end position="583"/>
    </location>
</feature>
<feature type="strand" evidence="8">
    <location>
        <begin position="590"/>
        <end position="592"/>
    </location>
</feature>
<feature type="strand" evidence="8">
    <location>
        <begin position="600"/>
        <end position="606"/>
    </location>
</feature>
<feature type="turn" evidence="8">
    <location>
        <begin position="607"/>
        <end position="610"/>
    </location>
</feature>
<feature type="strand" evidence="8">
    <location>
        <begin position="611"/>
        <end position="616"/>
    </location>
</feature>
<feature type="turn" evidence="8">
    <location>
        <begin position="617"/>
        <end position="620"/>
    </location>
</feature>
<feature type="strand" evidence="8">
    <location>
        <begin position="621"/>
        <end position="626"/>
    </location>
</feature>
<feature type="strand" evidence="8">
    <location>
        <begin position="633"/>
        <end position="636"/>
    </location>
</feature>
<feature type="strand" evidence="8">
    <location>
        <begin position="641"/>
        <end position="649"/>
    </location>
</feature>
<feature type="strand" evidence="8">
    <location>
        <begin position="652"/>
        <end position="657"/>
    </location>
</feature>
<feature type="turn" evidence="8">
    <location>
        <begin position="658"/>
        <end position="661"/>
    </location>
</feature>
<feature type="strand" evidence="8">
    <location>
        <begin position="662"/>
        <end position="667"/>
    </location>
</feature>
<feature type="turn" evidence="8">
    <location>
        <begin position="668"/>
        <end position="670"/>
    </location>
</feature>
<feature type="strand" evidence="8">
    <location>
        <begin position="675"/>
        <end position="678"/>
    </location>
</feature>
<feature type="strand" evidence="8">
    <location>
        <begin position="687"/>
        <end position="690"/>
    </location>
</feature>
<feature type="helix" evidence="8">
    <location>
        <begin position="692"/>
        <end position="694"/>
    </location>
</feature>
<feature type="turn" evidence="8">
    <location>
        <begin position="701"/>
        <end position="704"/>
    </location>
</feature>
<feature type="helix" evidence="8">
    <location>
        <begin position="705"/>
        <end position="708"/>
    </location>
</feature>
<feature type="strand" evidence="8">
    <location>
        <begin position="710"/>
        <end position="714"/>
    </location>
</feature>
<feature type="strand" evidence="9">
    <location>
        <begin position="717"/>
        <end position="719"/>
    </location>
</feature>
<feature type="strand" evidence="8">
    <location>
        <begin position="721"/>
        <end position="723"/>
    </location>
</feature>
<feature type="strand" evidence="8">
    <location>
        <begin position="728"/>
        <end position="731"/>
    </location>
</feature>
<feature type="turn" evidence="8">
    <location>
        <begin position="732"/>
        <end position="734"/>
    </location>
</feature>
<feature type="strand" evidence="8">
    <location>
        <begin position="735"/>
        <end position="737"/>
    </location>
</feature>
<dbReference type="EMBL" id="AABR03025549">
    <property type="status" value="NOT_ANNOTATED_CDS"/>
    <property type="molecule type" value="Genomic_DNA"/>
</dbReference>
<dbReference type="EMBL" id="AABR03027097">
    <property type="status" value="NOT_ANNOTATED_CDS"/>
    <property type="molecule type" value="Genomic_DNA"/>
</dbReference>
<dbReference type="EMBL" id="AABR03027512">
    <property type="status" value="NOT_ANNOTATED_CDS"/>
    <property type="molecule type" value="Genomic_DNA"/>
</dbReference>
<dbReference type="EMBL" id="AABR03029369">
    <property type="status" value="NOT_ANNOTATED_CDS"/>
    <property type="molecule type" value="Genomic_DNA"/>
</dbReference>
<dbReference type="EMBL" id="AB011533">
    <property type="protein sequence ID" value="BAA88688.1"/>
    <property type="molecule type" value="mRNA"/>
</dbReference>
<dbReference type="PDB" id="3V64">
    <property type="method" value="X-ray"/>
    <property type="resolution" value="2.85 A"/>
    <property type="chains" value="C/D=396-737"/>
</dbReference>
<dbReference type="PDB" id="3V65">
    <property type="method" value="X-ray"/>
    <property type="resolution" value="3.30 A"/>
    <property type="chains" value="B/D=353-737"/>
</dbReference>
<dbReference type="PDBsum" id="3V64"/>
<dbReference type="PDBsum" id="3V65"/>
<dbReference type="SMR" id="Q9QYP1"/>
<dbReference type="CORUM" id="Q9QYP1"/>
<dbReference type="FunCoup" id="Q9QYP1">
    <property type="interactions" value="1954"/>
</dbReference>
<dbReference type="STRING" id="10116.ENSRNOP00000021353"/>
<dbReference type="GlyCosmos" id="Q9QYP1">
    <property type="glycosylation" value="7 sites, No reported glycans"/>
</dbReference>
<dbReference type="GlyGen" id="Q9QYP1">
    <property type="glycosylation" value="8 sites"/>
</dbReference>
<dbReference type="iPTMnet" id="Q9QYP1"/>
<dbReference type="PhosphoSitePlus" id="Q9QYP1"/>
<dbReference type="PaxDb" id="10116-ENSRNOP00000021353"/>
<dbReference type="ABCD" id="Q9QYP1">
    <property type="antibodies" value="2 sequenced antibodies"/>
</dbReference>
<dbReference type="Ensembl" id="ENSRNOT00000021353.5">
    <property type="protein sequence ID" value="ENSRNOP00000021353.3"/>
    <property type="gene ID" value="ENSRNOG00000015285.7"/>
</dbReference>
<dbReference type="UCSC" id="RGD:619731">
    <property type="organism name" value="rat"/>
</dbReference>
<dbReference type="AGR" id="RGD:619731"/>
<dbReference type="RGD" id="619731">
    <property type="gene designation" value="Lrp4"/>
</dbReference>
<dbReference type="eggNOG" id="KOG1215">
    <property type="taxonomic scope" value="Eukaryota"/>
</dbReference>
<dbReference type="GeneTree" id="ENSGT00940000158287"/>
<dbReference type="HOGENOM" id="CLU_000085_4_1_1"/>
<dbReference type="InParanoid" id="Q9QYP1"/>
<dbReference type="PhylomeDB" id="Q9QYP1"/>
<dbReference type="TreeFam" id="TF315253"/>
<dbReference type="EvolutionaryTrace" id="Q9QYP1"/>
<dbReference type="PRO" id="PR:Q9QYP1"/>
<dbReference type="Proteomes" id="UP000002494">
    <property type="component" value="Chromosome 3"/>
</dbReference>
<dbReference type="Bgee" id="ENSRNOG00000015285">
    <property type="expression patterns" value="Expressed in lung and 19 other cell types or tissues"/>
</dbReference>
<dbReference type="ExpressionAtlas" id="Q9QYP1">
    <property type="expression patterns" value="baseline and differential"/>
</dbReference>
<dbReference type="GO" id="GO:0009986">
    <property type="term" value="C:cell surface"/>
    <property type="evidence" value="ECO:0000314"/>
    <property type="project" value="UniProtKB"/>
</dbReference>
<dbReference type="GO" id="GO:0030425">
    <property type="term" value="C:dendrite"/>
    <property type="evidence" value="ECO:0000314"/>
    <property type="project" value="UniProtKB"/>
</dbReference>
<dbReference type="GO" id="GO:0031594">
    <property type="term" value="C:neuromuscular junction"/>
    <property type="evidence" value="ECO:0000250"/>
    <property type="project" value="UniProtKB"/>
</dbReference>
<dbReference type="GO" id="GO:0043025">
    <property type="term" value="C:neuronal cell body"/>
    <property type="evidence" value="ECO:0000314"/>
    <property type="project" value="UniProtKB"/>
</dbReference>
<dbReference type="GO" id="GO:0005886">
    <property type="term" value="C:plasma membrane"/>
    <property type="evidence" value="ECO:0000266"/>
    <property type="project" value="RGD"/>
</dbReference>
<dbReference type="GO" id="GO:0044853">
    <property type="term" value="C:plasma membrane raft"/>
    <property type="evidence" value="ECO:0000314"/>
    <property type="project" value="UniProtKB"/>
</dbReference>
<dbReference type="GO" id="GO:0014069">
    <property type="term" value="C:postsynaptic density"/>
    <property type="evidence" value="ECO:0000314"/>
    <property type="project" value="UniProtKB"/>
</dbReference>
<dbReference type="GO" id="GO:0045202">
    <property type="term" value="C:synapse"/>
    <property type="evidence" value="ECO:0000266"/>
    <property type="project" value="RGD"/>
</dbReference>
<dbReference type="GO" id="GO:0097060">
    <property type="term" value="C:synaptic membrane"/>
    <property type="evidence" value="ECO:0000314"/>
    <property type="project" value="UniProtKB"/>
</dbReference>
<dbReference type="GO" id="GO:0034185">
    <property type="term" value="F:apolipoprotein binding"/>
    <property type="evidence" value="ECO:0000353"/>
    <property type="project" value="UniProtKB"/>
</dbReference>
<dbReference type="GO" id="GO:0005509">
    <property type="term" value="F:calcium ion binding"/>
    <property type="evidence" value="ECO:0007669"/>
    <property type="project" value="InterPro"/>
</dbReference>
<dbReference type="GO" id="GO:0015026">
    <property type="term" value="F:coreceptor activity"/>
    <property type="evidence" value="ECO:0000266"/>
    <property type="project" value="RGD"/>
</dbReference>
<dbReference type="GO" id="GO:0042803">
    <property type="term" value="F:protein homodimerization activity"/>
    <property type="evidence" value="ECO:0000266"/>
    <property type="project" value="RGD"/>
</dbReference>
<dbReference type="GO" id="GO:0030971">
    <property type="term" value="F:receptor tyrosine kinase binding"/>
    <property type="evidence" value="ECO:0000353"/>
    <property type="project" value="UniProtKB"/>
</dbReference>
<dbReference type="GO" id="GO:0097110">
    <property type="term" value="F:scaffold protein binding"/>
    <property type="evidence" value="ECO:0000353"/>
    <property type="project" value="UniProtKB"/>
</dbReference>
<dbReference type="GO" id="GO:0150094">
    <property type="term" value="P:amyloid-beta clearance by cellular catabolic process"/>
    <property type="evidence" value="ECO:0000266"/>
    <property type="project" value="RGD"/>
</dbReference>
<dbReference type="GO" id="GO:0048813">
    <property type="term" value="P:dendrite morphogenesis"/>
    <property type="evidence" value="ECO:0000315"/>
    <property type="project" value="UniProtKB"/>
</dbReference>
<dbReference type="GO" id="GO:0009953">
    <property type="term" value="P:dorsal/ventral pattern formation"/>
    <property type="evidence" value="ECO:0000266"/>
    <property type="project" value="RGD"/>
</dbReference>
<dbReference type="GO" id="GO:0042733">
    <property type="term" value="P:embryonic digit morphogenesis"/>
    <property type="evidence" value="ECO:0000266"/>
    <property type="project" value="RGD"/>
</dbReference>
<dbReference type="GO" id="GO:0030326">
    <property type="term" value="P:embryonic limb morphogenesis"/>
    <property type="evidence" value="ECO:0000266"/>
    <property type="project" value="RGD"/>
</dbReference>
<dbReference type="GO" id="GO:0006897">
    <property type="term" value="P:endocytosis"/>
    <property type="evidence" value="ECO:0007669"/>
    <property type="project" value="UniProtKB-KW"/>
</dbReference>
<dbReference type="GO" id="GO:0007167">
    <property type="term" value="P:enzyme-linked receptor protein signaling pathway"/>
    <property type="evidence" value="ECO:0000266"/>
    <property type="project" value="RGD"/>
</dbReference>
<dbReference type="GO" id="GO:0048699">
    <property type="term" value="P:generation of neurons"/>
    <property type="evidence" value="ECO:0000318"/>
    <property type="project" value="GO_Central"/>
</dbReference>
<dbReference type="GO" id="GO:0001942">
    <property type="term" value="P:hair follicle development"/>
    <property type="evidence" value="ECO:0000266"/>
    <property type="project" value="RGD"/>
</dbReference>
<dbReference type="GO" id="GO:0001822">
    <property type="term" value="P:kidney development"/>
    <property type="evidence" value="ECO:0000266"/>
    <property type="project" value="RGD"/>
</dbReference>
<dbReference type="GO" id="GO:0060173">
    <property type="term" value="P:limb development"/>
    <property type="evidence" value="ECO:0000266"/>
    <property type="project" value="RGD"/>
</dbReference>
<dbReference type="GO" id="GO:0050771">
    <property type="term" value="P:negative regulation of axonogenesis"/>
    <property type="evidence" value="ECO:0000250"/>
    <property type="project" value="UniProtKB"/>
</dbReference>
<dbReference type="GO" id="GO:0090090">
    <property type="term" value="P:negative regulation of canonical Wnt signaling pathway"/>
    <property type="evidence" value="ECO:0000266"/>
    <property type="project" value="RGD"/>
</dbReference>
<dbReference type="GO" id="GO:0030279">
    <property type="term" value="P:negative regulation of ossification"/>
    <property type="evidence" value="ECO:0000266"/>
    <property type="project" value="RGD"/>
</dbReference>
<dbReference type="GO" id="GO:0042475">
    <property type="term" value="P:odontogenesis of dentin-containing tooth"/>
    <property type="evidence" value="ECO:0000266"/>
    <property type="project" value="RGD"/>
</dbReference>
<dbReference type="GO" id="GO:1901631">
    <property type="term" value="P:positive regulation of presynaptic membrane organization"/>
    <property type="evidence" value="ECO:0000250"/>
    <property type="project" value="UniProtKB"/>
</dbReference>
<dbReference type="GO" id="GO:0035022">
    <property type="term" value="P:positive regulation of Rac protein signal transduction"/>
    <property type="evidence" value="ECO:0000266"/>
    <property type="project" value="RGD"/>
</dbReference>
<dbReference type="GO" id="GO:1904395">
    <property type="term" value="P:positive regulation of skeletal muscle acetylcholine-gated channel clustering"/>
    <property type="evidence" value="ECO:0000266"/>
    <property type="project" value="RGD"/>
</dbReference>
<dbReference type="GO" id="GO:0097104">
    <property type="term" value="P:postsynaptic membrane assembly"/>
    <property type="evidence" value="ECO:0000250"/>
    <property type="project" value="UniProtKB"/>
</dbReference>
<dbReference type="GO" id="GO:0097105">
    <property type="term" value="P:presynaptic membrane assembly"/>
    <property type="evidence" value="ECO:0000250"/>
    <property type="project" value="UniProtKB"/>
</dbReference>
<dbReference type="GO" id="GO:0008104">
    <property type="term" value="P:protein localization"/>
    <property type="evidence" value="ECO:0000266"/>
    <property type="project" value="RGD"/>
</dbReference>
<dbReference type="GO" id="GO:0009954">
    <property type="term" value="P:proximal/distal pattern formation"/>
    <property type="evidence" value="ECO:0000266"/>
    <property type="project" value="RGD"/>
</dbReference>
<dbReference type="GO" id="GO:0043113">
    <property type="term" value="P:receptor clustering"/>
    <property type="evidence" value="ECO:0000266"/>
    <property type="project" value="RGD"/>
</dbReference>
<dbReference type="GO" id="GO:0150052">
    <property type="term" value="P:regulation of postsynapse assembly"/>
    <property type="evidence" value="ECO:0000266"/>
    <property type="project" value="RGD"/>
</dbReference>
<dbReference type="GO" id="GO:0071340">
    <property type="term" value="P:skeletal muscle acetylcholine-gated channel clustering"/>
    <property type="evidence" value="ECO:0000250"/>
    <property type="project" value="UniProtKB"/>
</dbReference>
<dbReference type="GO" id="GO:0050808">
    <property type="term" value="P:synapse organization"/>
    <property type="evidence" value="ECO:0000315"/>
    <property type="project" value="UniProtKB"/>
</dbReference>
<dbReference type="GO" id="GO:0051124">
    <property type="term" value="P:synaptic assembly at neuromuscular junction"/>
    <property type="evidence" value="ECO:0000250"/>
    <property type="project" value="UniProtKB"/>
</dbReference>
<dbReference type="GO" id="GO:0016055">
    <property type="term" value="P:Wnt signaling pathway"/>
    <property type="evidence" value="ECO:0000266"/>
    <property type="project" value="RGD"/>
</dbReference>
<dbReference type="CDD" id="cd00054">
    <property type="entry name" value="EGF_CA"/>
    <property type="match status" value="1"/>
</dbReference>
<dbReference type="CDD" id="cd00112">
    <property type="entry name" value="LDLa"/>
    <property type="match status" value="7"/>
</dbReference>
<dbReference type="FunFam" id="2.120.10.30:FF:000029">
    <property type="entry name" value="LDL receptor related protein 4"/>
    <property type="match status" value="1"/>
</dbReference>
<dbReference type="FunFam" id="4.10.400.10:FF:000017">
    <property type="entry name" value="LDL receptor related protein 4"/>
    <property type="match status" value="2"/>
</dbReference>
<dbReference type="FunFam" id="4.10.400.10:FF:000092">
    <property type="entry name" value="LDL receptor related protein 4"/>
    <property type="match status" value="1"/>
</dbReference>
<dbReference type="FunFam" id="2.10.25.10:FF:000009">
    <property type="entry name" value="Low-density lipoprotein receptor isoform 1"/>
    <property type="match status" value="1"/>
</dbReference>
<dbReference type="FunFam" id="4.10.400.10:FF:000009">
    <property type="entry name" value="Low-density lipoprotein receptor-related protein 1"/>
    <property type="match status" value="1"/>
</dbReference>
<dbReference type="FunFam" id="4.10.400.10:FF:000034">
    <property type="entry name" value="Low-density lipoprotein receptor-related protein 2"/>
    <property type="match status" value="1"/>
</dbReference>
<dbReference type="FunFam" id="2.120.10.30:FF:000008">
    <property type="entry name" value="Low-density lipoprotein receptor-related protein 4"/>
    <property type="match status" value="3"/>
</dbReference>
<dbReference type="FunFam" id="4.10.400.10:FF:000085">
    <property type="entry name" value="low-density lipoprotein receptor-related protein 4"/>
    <property type="match status" value="1"/>
</dbReference>
<dbReference type="FunFam" id="4.10.400.10:FF:000098">
    <property type="entry name" value="low-density lipoprotein receptor-related protein 4"/>
    <property type="match status" value="1"/>
</dbReference>
<dbReference type="FunFam" id="4.10.400.10:FF:000006">
    <property type="entry name" value="Putative low-density lipoprotein receptor"/>
    <property type="match status" value="1"/>
</dbReference>
<dbReference type="Gene3D" id="2.10.25.10">
    <property type="entry name" value="Laminin"/>
    <property type="match status" value="2"/>
</dbReference>
<dbReference type="Gene3D" id="4.10.400.10">
    <property type="entry name" value="Low-density Lipoprotein Receptor"/>
    <property type="match status" value="8"/>
</dbReference>
<dbReference type="Gene3D" id="2.120.10.30">
    <property type="entry name" value="TolB, C-terminal domain"/>
    <property type="match status" value="4"/>
</dbReference>
<dbReference type="InterPro" id="IPR011042">
    <property type="entry name" value="6-blade_b-propeller_TolB-like"/>
</dbReference>
<dbReference type="InterPro" id="IPR026823">
    <property type="entry name" value="cEGF"/>
</dbReference>
<dbReference type="InterPro" id="IPR001881">
    <property type="entry name" value="EGF-like_Ca-bd_dom"/>
</dbReference>
<dbReference type="InterPro" id="IPR000742">
    <property type="entry name" value="EGF-like_dom"/>
</dbReference>
<dbReference type="InterPro" id="IPR018097">
    <property type="entry name" value="EGF_Ca-bd_CS"/>
</dbReference>
<dbReference type="InterPro" id="IPR009030">
    <property type="entry name" value="Growth_fac_rcpt_cys_sf"/>
</dbReference>
<dbReference type="InterPro" id="IPR036055">
    <property type="entry name" value="LDL_receptor-like_sf"/>
</dbReference>
<dbReference type="InterPro" id="IPR051221">
    <property type="entry name" value="LDLR-related"/>
</dbReference>
<dbReference type="InterPro" id="IPR023415">
    <property type="entry name" value="LDLR_class-A_CS"/>
</dbReference>
<dbReference type="InterPro" id="IPR000033">
    <property type="entry name" value="LDLR_classB_rpt"/>
</dbReference>
<dbReference type="InterPro" id="IPR002172">
    <property type="entry name" value="LDrepeatLR_classA_rpt"/>
</dbReference>
<dbReference type="PANTHER" id="PTHR22722:SF15">
    <property type="entry name" value="LOW-DENSITY LIPOPROTEIN RECEPTOR-RELATED"/>
    <property type="match status" value="1"/>
</dbReference>
<dbReference type="PANTHER" id="PTHR22722">
    <property type="entry name" value="LOW-DENSITY LIPOPROTEIN RECEPTOR-RELATED PROTEIN 2-RELATED"/>
    <property type="match status" value="1"/>
</dbReference>
<dbReference type="Pfam" id="PF12662">
    <property type="entry name" value="cEGF"/>
    <property type="match status" value="1"/>
</dbReference>
<dbReference type="Pfam" id="PF14670">
    <property type="entry name" value="FXa_inhibition"/>
    <property type="match status" value="2"/>
</dbReference>
<dbReference type="Pfam" id="PF00057">
    <property type="entry name" value="Ldl_recept_a"/>
    <property type="match status" value="8"/>
</dbReference>
<dbReference type="Pfam" id="PF00058">
    <property type="entry name" value="Ldl_recept_b"/>
    <property type="match status" value="16"/>
</dbReference>
<dbReference type="PRINTS" id="PR00261">
    <property type="entry name" value="LDLRECEPTOR"/>
</dbReference>
<dbReference type="SMART" id="SM00181">
    <property type="entry name" value="EGF"/>
    <property type="match status" value="7"/>
</dbReference>
<dbReference type="SMART" id="SM00179">
    <property type="entry name" value="EGF_CA"/>
    <property type="match status" value="2"/>
</dbReference>
<dbReference type="SMART" id="SM00192">
    <property type="entry name" value="LDLa"/>
    <property type="match status" value="8"/>
</dbReference>
<dbReference type="SMART" id="SM00135">
    <property type="entry name" value="LY"/>
    <property type="match status" value="20"/>
</dbReference>
<dbReference type="SUPFAM" id="SSF57196">
    <property type="entry name" value="EGF/Laminin"/>
    <property type="match status" value="2"/>
</dbReference>
<dbReference type="SUPFAM" id="SSF57184">
    <property type="entry name" value="Growth factor receptor domain"/>
    <property type="match status" value="1"/>
</dbReference>
<dbReference type="SUPFAM" id="SSF57424">
    <property type="entry name" value="LDL receptor-like module"/>
    <property type="match status" value="8"/>
</dbReference>
<dbReference type="SUPFAM" id="SSF63825">
    <property type="entry name" value="YWTD domain"/>
    <property type="match status" value="4"/>
</dbReference>
<dbReference type="PROSITE" id="PS00010">
    <property type="entry name" value="ASX_HYDROXYL"/>
    <property type="match status" value="1"/>
</dbReference>
<dbReference type="PROSITE" id="PS01186">
    <property type="entry name" value="EGF_2"/>
    <property type="match status" value="3"/>
</dbReference>
<dbReference type="PROSITE" id="PS01187">
    <property type="entry name" value="EGF_CA"/>
    <property type="match status" value="1"/>
</dbReference>
<dbReference type="PROSITE" id="PS01209">
    <property type="entry name" value="LDLRA_1"/>
    <property type="match status" value="8"/>
</dbReference>
<dbReference type="PROSITE" id="PS50068">
    <property type="entry name" value="LDLRA_2"/>
    <property type="match status" value="8"/>
</dbReference>
<dbReference type="PROSITE" id="PS51120">
    <property type="entry name" value="LDLRB"/>
    <property type="match status" value="20"/>
</dbReference>
<gene>
    <name type="primary">Lrp4</name>
    <name type="synonym">Megf7</name>
</gene>
<comment type="function">
    <text evidence="1">Mediates SOST-dependent inhibition of bone formation (By similarity). Functions as a specific facilitator of SOST-mediated inhibition of Wnt signaling (By similarity). Plays a key role in the formation and the maintenance of the neuromuscular junction (NMJ), the synapse between motor neuron and skeletal muscle. Directly binds AGRIN and recruits it to the MUSK signaling complex. Mediates the AGRIN-induced phosphorylation of MUSK, the kinase of the complex. The activation of MUSK in myotubes induces the formation of NMJ by regulating different processes including the transcription of specific genes and the clustering of AChR in the postsynaptic membrane. Alternatively, may be involved in the negative regulation of the canonical Wnt signaling pathway, being able to antagonize the LRP6-mediated activation of this pathway. More generally, has been proposed to function as a cell surface endocytic receptor binding and internalizing extracellular ligands for degradation by lysosomes. Plays an essential role in the process of digit differentiation.</text>
</comment>
<comment type="subunit">
    <text evidence="1 5">Homooligomer. Interacts with MUSK; the heterodimer forms an AGRIN receptor complex that binds AGRIN resulting in activation of MUSK (PubMed:18848351). Interacts (via the extracellular domain) with SOST; the interaction facilitates the inhibition of Wnt signaling (By similarity). Interacts with MESD; the interaction promotes glycosylation of LRP4 and its cell-surface expression (By similarity).</text>
</comment>
<comment type="subcellular location">
    <subcellularLocation>
        <location evidence="1">Cell membrane</location>
        <topology evidence="2">Single-pass type I membrane protein</topology>
    </subcellularLocation>
</comment>
<comment type="tissue specificity">
    <text evidence="6">Expressed in different regions of the brain, mainly in the olfactory bulb, at lower level in the cerebral cortex and hippocampus.</text>
</comment>
<comment type="PTM">
    <text evidence="1">N-glycosylation is required for cell surface location.</text>
</comment>
<comment type="similarity">
    <text evidence="7">Belongs to the LDLR family.</text>
</comment>
<evidence type="ECO:0000250" key="1">
    <source>
        <dbReference type="UniProtKB" id="Q8VI56"/>
    </source>
</evidence>
<evidence type="ECO:0000255" key="2"/>
<evidence type="ECO:0000255" key="3">
    <source>
        <dbReference type="PROSITE-ProRule" id="PRU00124"/>
    </source>
</evidence>
<evidence type="ECO:0000256" key="4">
    <source>
        <dbReference type="SAM" id="MobiDB-lite"/>
    </source>
</evidence>
<evidence type="ECO:0000269" key="5">
    <source>
    </source>
</evidence>
<evidence type="ECO:0000269" key="6">
    <source>
    </source>
</evidence>
<evidence type="ECO:0000305" key="7"/>
<evidence type="ECO:0007829" key="8">
    <source>
        <dbReference type="PDB" id="3V64"/>
    </source>
</evidence>
<evidence type="ECO:0007829" key="9">
    <source>
        <dbReference type="PDB" id="3V65"/>
    </source>
</evidence>
<protein>
    <recommendedName>
        <fullName>Low-density lipoprotein receptor-related protein 4</fullName>
        <shortName>LRP-4</shortName>
    </recommendedName>
    <alternativeName>
        <fullName>Multiple epidermal growth factor-like domains 7</fullName>
    </alternativeName>
</protein>
<sequence>MRRWWGALLLGALLCAHGTASNLECACGRSHFTCAVSALGECTCIPAQWQCDGDNDCGDHSDEDGCTLPTCSPLDFHCDNGKCIRRSWVCDGDNDCEDDSDEQDCPPRECEEDEFPCQNGYCIRSLWHCDGDNDCGDNSDEQCDMRKCSDKEFRCSDGSCIAEHWYCDGDTDCKDGSDEESCPSAVPSPPCNLEEFQCAYGRCILDIYHCDGDDDCGDWSDESDCSSHQPCRSGEFMCDSGLCVNAGWRCDGDADCDDQSDERNCTTSMCTAEQFRCRSGRCVRLSWRCDGEDDCADNSDEENCENTGSPQCASDQFLCWNGRCIGQRKLCNGVNDCGDNSDESPQQNCRPRTGEENCNVNNGGCAQKCQMIRGAVQCTCHTGYRLTEDGRTCQDVNECAEEGYCSQGCTNSEGAFQCWCEAGYELRPDRRSCKALGPEPVLLFANRIDIRQVLPHRSEYTLLLNNLENAIALDFHHRRELVFWSDVTLDRILRANLNGSNVEEVVSTGLESPGGLAVDWVHDKLYWTDSGTSRIEVANLDGAHRKVLLWQSLEKPRAIALHPMEGTIYWTDWGNTPRIEASSMDGSGRRIIADTHLFWPNGLTIDYAGRRMYWVDAKHHVIERANLDGSHRKAVISQGLPHPFAITVFEDSLYWTDWHTKSINSANKFTGKNQEIIRNKLHFPMDIHTLHPQRQPAGKNRCGDNNGGCTHLCLPSGQNYTCACPTGFRKINSHACAQSLDKFLLFARRMDIRRISFDTEDLSDDVIPLADVRSAVALDWDSRDDHVYWTDVSTDTISRAKWDGTGQKVVVDTSLESPAGLAIDWVTNKLYWTDAGTDRIEVANTDGSMRTVLIWENLDRPRDIVVEPMGGYMYWTDWGASPKIERAGMDASNRQVIISSNLTWPNGLAIDYGSQRLYWADAGMKTIEFAGLDGSKRKVLIGSQLPHPFGLTLYGQRIYWTDWQTKSIQSADRLTGLDRETLQENLENLMDIHVFHRQRPPVTTPCAVENGGCSHLCLRSPSPSGFSCTCPTGINLLLDGKTCSPGMNSFLIFARRIDVRMVSLDIPYFADVVVPINMTMKNTIAIGVDPLEGKVYWSDSTLHRISRASLDGSQHEDIITTGLQTTDGLAVDAIGRKVYWTDTGTNRIEVGNLDGSMRKVLVWQNLDSPRAIVLYHEMGFMYWTDWGENAKLERSGMDGSDRTVLINNNLGWPNGLTVDKTSSQLLWADAHTERIEVADLNGANRHTLVSPVQHPYGLTLLDSYIYWTDWQTRSIHRADKSTGSNVILVRSNLPGLMDIQAVDRAQPLGFNKCGSRNGGCSHLCLPRPSGFSCACPTGIQLKGDGKTCDPSPETYLLFSSRGSIRRISLDTDDHTDVHVPVPGLNNVISLDYDSVDGKVYYTDVFLDVIRRADLNGSNMETVIGHGLKTTDGLAVDWVARNLYWTDTGRNTIEASRLDGSCRKVLINNSLDEPRAIAVFPRKGYLFWTDWGHIAKIERANLDGSERKVLINADLGWPNGLTLDYDTRRIYWVDAHLDRIESADLNGKLRQVLVSHVSHPFALTQQDRWIYWTDWQTKSIQRVDKYSGRNKETVLANVEGLMDIIVVSPQRQTGTNACGVNNGGCSHLCFARASDFVCACPDEPDSHPCSLVPGLMPPAPRATSLNEKSPVLPNTLPTTLHSSTTRTRTSPEGAEGRCSERDAQLGLCAHSNEAVPAAPGEGLHVSYAVGGLLSVLLILLVTAALMLYRHRKSKFTDPGMGNLTYSNPSYRTSTQEVKIEAAPKPAMYNQLCYKKEGGPDHSYTKEKIKIVEGIHLLAGHDAEWGDLKQLRSSRGGLLRDHVCMKTDTVSIQASSGSLDDTETEQLLQEEQSECSSVHTATTPERRGSLPDTGWKHERKLSSESQV</sequence>
<reference key="1">
    <citation type="journal article" date="2004" name="Nature">
        <title>Genome sequence of the Brown Norway rat yields insights into mammalian evolution.</title>
        <authorList>
            <person name="Gibbs R.A."/>
            <person name="Weinstock G.M."/>
            <person name="Metzker M.L."/>
            <person name="Muzny D.M."/>
            <person name="Sodergren E.J."/>
            <person name="Scherer S."/>
            <person name="Scott G."/>
            <person name="Steffen D."/>
            <person name="Worley K.C."/>
            <person name="Burch P.E."/>
            <person name="Okwuonu G."/>
            <person name="Hines S."/>
            <person name="Lewis L."/>
            <person name="Deramo C."/>
            <person name="Delgado O."/>
            <person name="Dugan-Rocha S."/>
            <person name="Miner G."/>
            <person name="Morgan M."/>
            <person name="Hawes A."/>
            <person name="Gill R."/>
            <person name="Holt R.A."/>
            <person name="Adams M.D."/>
            <person name="Amanatides P.G."/>
            <person name="Baden-Tillson H."/>
            <person name="Barnstead M."/>
            <person name="Chin S."/>
            <person name="Evans C.A."/>
            <person name="Ferriera S."/>
            <person name="Fosler C."/>
            <person name="Glodek A."/>
            <person name="Gu Z."/>
            <person name="Jennings D."/>
            <person name="Kraft C.L."/>
            <person name="Nguyen T."/>
            <person name="Pfannkoch C.M."/>
            <person name="Sitter C."/>
            <person name="Sutton G.G."/>
            <person name="Venter J.C."/>
            <person name="Woodage T."/>
            <person name="Smith D."/>
            <person name="Lee H.-M."/>
            <person name="Gustafson E."/>
            <person name="Cahill P."/>
            <person name="Kana A."/>
            <person name="Doucette-Stamm L."/>
            <person name="Weinstock K."/>
            <person name="Fechtel K."/>
            <person name="Weiss R.B."/>
            <person name="Dunn D.M."/>
            <person name="Green E.D."/>
            <person name="Blakesley R.W."/>
            <person name="Bouffard G.G."/>
            <person name="De Jong P.J."/>
            <person name="Osoegawa K."/>
            <person name="Zhu B."/>
            <person name="Marra M."/>
            <person name="Schein J."/>
            <person name="Bosdet I."/>
            <person name="Fjell C."/>
            <person name="Jones S."/>
            <person name="Krzywinski M."/>
            <person name="Mathewson C."/>
            <person name="Siddiqui A."/>
            <person name="Wye N."/>
            <person name="McPherson J."/>
            <person name="Zhao S."/>
            <person name="Fraser C.M."/>
            <person name="Shetty J."/>
            <person name="Shatsman S."/>
            <person name="Geer K."/>
            <person name="Chen Y."/>
            <person name="Abramzon S."/>
            <person name="Nierman W.C."/>
            <person name="Havlak P.H."/>
            <person name="Chen R."/>
            <person name="Durbin K.J."/>
            <person name="Egan A."/>
            <person name="Ren Y."/>
            <person name="Song X.-Z."/>
            <person name="Li B."/>
            <person name="Liu Y."/>
            <person name="Qin X."/>
            <person name="Cawley S."/>
            <person name="Cooney A.J."/>
            <person name="D'Souza L.M."/>
            <person name="Martin K."/>
            <person name="Wu J.Q."/>
            <person name="Gonzalez-Garay M.L."/>
            <person name="Jackson A.R."/>
            <person name="Kalafus K.J."/>
            <person name="McLeod M.P."/>
            <person name="Milosavljevic A."/>
            <person name="Virk D."/>
            <person name="Volkov A."/>
            <person name="Wheeler D.A."/>
            <person name="Zhang Z."/>
            <person name="Bailey J.A."/>
            <person name="Eichler E.E."/>
            <person name="Tuzun E."/>
            <person name="Birney E."/>
            <person name="Mongin E."/>
            <person name="Ureta-Vidal A."/>
            <person name="Woodwark C."/>
            <person name="Zdobnov E."/>
            <person name="Bork P."/>
            <person name="Suyama M."/>
            <person name="Torrents D."/>
            <person name="Alexandersson M."/>
            <person name="Trask B.J."/>
            <person name="Young J.M."/>
            <person name="Huang H."/>
            <person name="Wang H."/>
            <person name="Xing H."/>
            <person name="Daniels S."/>
            <person name="Gietzen D."/>
            <person name="Schmidt J."/>
            <person name="Stevens K."/>
            <person name="Vitt U."/>
            <person name="Wingrove J."/>
            <person name="Camara F."/>
            <person name="Mar Alba M."/>
            <person name="Abril J.F."/>
            <person name="Guigo R."/>
            <person name="Smit A."/>
            <person name="Dubchak I."/>
            <person name="Rubin E.M."/>
            <person name="Couronne O."/>
            <person name="Poliakov A."/>
            <person name="Huebner N."/>
            <person name="Ganten D."/>
            <person name="Goesele C."/>
            <person name="Hummel O."/>
            <person name="Kreitler T."/>
            <person name="Lee Y.-A."/>
            <person name="Monti J."/>
            <person name="Schulz H."/>
            <person name="Zimdahl H."/>
            <person name="Himmelbauer H."/>
            <person name="Lehrach H."/>
            <person name="Jacob H.J."/>
            <person name="Bromberg S."/>
            <person name="Gullings-Handley J."/>
            <person name="Jensen-Seaman M.I."/>
            <person name="Kwitek A.E."/>
            <person name="Lazar J."/>
            <person name="Pasko D."/>
            <person name="Tonellato P.J."/>
            <person name="Twigger S."/>
            <person name="Ponting C.P."/>
            <person name="Duarte J.M."/>
            <person name="Rice S."/>
            <person name="Goodstadt L."/>
            <person name="Beatson S.A."/>
            <person name="Emes R.D."/>
            <person name="Winter E.E."/>
            <person name="Webber C."/>
            <person name="Brandt P."/>
            <person name="Nyakatura G."/>
            <person name="Adetobi M."/>
            <person name="Chiaromonte F."/>
            <person name="Elnitski L."/>
            <person name="Eswara P."/>
            <person name="Hardison R.C."/>
            <person name="Hou M."/>
            <person name="Kolbe D."/>
            <person name="Makova K."/>
            <person name="Miller W."/>
            <person name="Nekrutenko A."/>
            <person name="Riemer C."/>
            <person name="Schwartz S."/>
            <person name="Taylor J."/>
            <person name="Yang S."/>
            <person name="Zhang Y."/>
            <person name="Lindpaintner K."/>
            <person name="Andrews T.D."/>
            <person name="Caccamo M."/>
            <person name="Clamp M."/>
            <person name="Clarke L."/>
            <person name="Curwen V."/>
            <person name="Durbin R.M."/>
            <person name="Eyras E."/>
            <person name="Searle S.M."/>
            <person name="Cooper G.M."/>
            <person name="Batzoglou S."/>
            <person name="Brudno M."/>
            <person name="Sidow A."/>
            <person name="Stone E.A."/>
            <person name="Payseur B.A."/>
            <person name="Bourque G."/>
            <person name="Lopez-Otin C."/>
            <person name="Puente X.S."/>
            <person name="Chakrabarti K."/>
            <person name="Chatterji S."/>
            <person name="Dewey C."/>
            <person name="Pachter L."/>
            <person name="Bray N."/>
            <person name="Yap V.B."/>
            <person name="Caspi A."/>
            <person name="Tesler G."/>
            <person name="Pevzner P.A."/>
            <person name="Haussler D."/>
            <person name="Roskin K.M."/>
            <person name="Baertsch R."/>
            <person name="Clawson H."/>
            <person name="Furey T.S."/>
            <person name="Hinrichs A.S."/>
            <person name="Karolchik D."/>
            <person name="Kent W.J."/>
            <person name="Rosenbloom K.R."/>
            <person name="Trumbower H."/>
            <person name="Weirauch M."/>
            <person name="Cooper D.N."/>
            <person name="Stenson P.D."/>
            <person name="Ma B."/>
            <person name="Brent M."/>
            <person name="Arumugam M."/>
            <person name="Shteynberg D."/>
            <person name="Copley R.R."/>
            <person name="Taylor M.S."/>
            <person name="Riethman H."/>
            <person name="Mudunuri U."/>
            <person name="Peterson J."/>
            <person name="Guyer M."/>
            <person name="Felsenfeld A."/>
            <person name="Old S."/>
            <person name="Mockrin S."/>
            <person name="Collins F.S."/>
        </authorList>
    </citation>
    <scope>NUCLEOTIDE SEQUENCE [LARGE SCALE GENOMIC DNA]</scope>
    <source>
        <strain>Brown Norway</strain>
    </source>
</reference>
<reference key="2">
    <citation type="journal article" date="1998" name="Genomics">
        <title>Identification of high-molecular-weight proteins with multiple EGF-like motifs by motif-trap screening.</title>
        <authorList>
            <person name="Nakayama M."/>
            <person name="Nakajima D."/>
            <person name="Nagase T."/>
            <person name="Nomura N."/>
            <person name="Seki N."/>
            <person name="Ohara O."/>
        </authorList>
    </citation>
    <scope>NUCLEOTIDE SEQUENCE OF 608-1905</scope>
    <scope>TISSUE SPECIFICITY</scope>
    <source>
        <strain>Sprague-Dawley</strain>
        <tissue>Brain</tissue>
    </source>
</reference>
<reference key="3">
    <citation type="journal article" date="2008" name="Cell">
        <title>Lrp4 is a receptor for Agrin and forms a complex with MuSK.</title>
        <authorList>
            <person name="Kim N."/>
            <person name="Stiegler A.L."/>
            <person name="Cameron T.O."/>
            <person name="Hallock P.T."/>
            <person name="Gomez A.M."/>
            <person name="Huang J.H."/>
            <person name="Hubbard S.R."/>
            <person name="Dustin M.L."/>
            <person name="Burden S.J."/>
        </authorList>
    </citation>
    <scope>INTERACTION WITH MUSK</scope>
</reference>
<name>LRP4_RAT</name>
<organism>
    <name type="scientific">Rattus norvegicus</name>
    <name type="common">Rat</name>
    <dbReference type="NCBI Taxonomy" id="10116"/>
    <lineage>
        <taxon>Eukaryota</taxon>
        <taxon>Metazoa</taxon>
        <taxon>Chordata</taxon>
        <taxon>Craniata</taxon>
        <taxon>Vertebrata</taxon>
        <taxon>Euteleostomi</taxon>
        <taxon>Mammalia</taxon>
        <taxon>Eutheria</taxon>
        <taxon>Euarchontoglires</taxon>
        <taxon>Glires</taxon>
        <taxon>Rodentia</taxon>
        <taxon>Myomorpha</taxon>
        <taxon>Muroidea</taxon>
        <taxon>Muridae</taxon>
        <taxon>Murinae</taxon>
        <taxon>Rattus</taxon>
    </lineage>
</organism>
<keyword id="KW-0002">3D-structure</keyword>
<keyword id="KW-0106">Calcium</keyword>
<keyword id="KW-1003">Cell membrane</keyword>
<keyword id="KW-0217">Developmental protein</keyword>
<keyword id="KW-0221">Differentiation</keyword>
<keyword id="KW-1015">Disulfide bond</keyword>
<keyword id="KW-0245">EGF-like domain</keyword>
<keyword id="KW-0254">Endocytosis</keyword>
<keyword id="KW-0325">Glycoprotein</keyword>
<keyword id="KW-0472">Membrane</keyword>
<keyword id="KW-0675">Receptor</keyword>
<keyword id="KW-1185">Reference proteome</keyword>
<keyword id="KW-0677">Repeat</keyword>
<keyword id="KW-0732">Signal</keyword>
<keyword id="KW-0812">Transmembrane</keyword>
<keyword id="KW-1133">Transmembrane helix</keyword>
<keyword id="KW-0879">Wnt signaling pathway</keyword>
<accession>Q9QYP1</accession>
<proteinExistence type="evidence at protein level"/>